<name>ARGB_NOCFA</name>
<gene>
    <name evidence="1" type="primary">argB</name>
    <name type="ordered locus">NFA_19380</name>
</gene>
<accession>Q5YYF7</accession>
<comment type="function">
    <text evidence="1">Catalyzes the ATP-dependent phosphorylation of N-acetyl-L-glutamate.</text>
</comment>
<comment type="catalytic activity">
    <reaction evidence="1">
        <text>N-acetyl-L-glutamate + ATP = N-acetyl-L-glutamyl 5-phosphate + ADP</text>
        <dbReference type="Rhea" id="RHEA:14629"/>
        <dbReference type="ChEBI" id="CHEBI:30616"/>
        <dbReference type="ChEBI" id="CHEBI:44337"/>
        <dbReference type="ChEBI" id="CHEBI:57936"/>
        <dbReference type="ChEBI" id="CHEBI:456216"/>
        <dbReference type="EC" id="2.7.2.8"/>
    </reaction>
</comment>
<comment type="pathway">
    <text evidence="1">Amino-acid biosynthesis; L-arginine biosynthesis; N(2)-acetyl-L-ornithine from L-glutamate: step 2/4.</text>
</comment>
<comment type="subcellular location">
    <subcellularLocation>
        <location evidence="1">Cytoplasm</location>
    </subcellularLocation>
</comment>
<comment type="similarity">
    <text evidence="1">Belongs to the acetylglutamate kinase family. ArgB subfamily.</text>
</comment>
<evidence type="ECO:0000255" key="1">
    <source>
        <dbReference type="HAMAP-Rule" id="MF_00082"/>
    </source>
</evidence>
<proteinExistence type="inferred from homology"/>
<organism>
    <name type="scientific">Nocardia farcinica (strain IFM 10152)</name>
    <dbReference type="NCBI Taxonomy" id="247156"/>
    <lineage>
        <taxon>Bacteria</taxon>
        <taxon>Bacillati</taxon>
        <taxon>Actinomycetota</taxon>
        <taxon>Actinomycetes</taxon>
        <taxon>Mycobacteriales</taxon>
        <taxon>Nocardiaceae</taxon>
        <taxon>Nocardia</taxon>
    </lineage>
</organism>
<reference key="1">
    <citation type="journal article" date="2004" name="Proc. Natl. Acad. Sci. U.S.A.">
        <title>The complete genomic sequence of Nocardia farcinica IFM 10152.</title>
        <authorList>
            <person name="Ishikawa J."/>
            <person name="Yamashita A."/>
            <person name="Mikami Y."/>
            <person name="Hoshino Y."/>
            <person name="Kurita H."/>
            <person name="Hotta K."/>
            <person name="Shiba T."/>
            <person name="Hattori M."/>
        </authorList>
    </citation>
    <scope>NUCLEOTIDE SEQUENCE [LARGE SCALE GENOMIC DNA]</scope>
    <source>
        <strain>IFM 10152</strain>
    </source>
</reference>
<dbReference type="EC" id="2.7.2.8" evidence="1"/>
<dbReference type="EMBL" id="AP006618">
    <property type="protein sequence ID" value="BAD56784.1"/>
    <property type="molecule type" value="Genomic_DNA"/>
</dbReference>
<dbReference type="RefSeq" id="WP_011208469.1">
    <property type="nucleotide sequence ID" value="NC_006361.1"/>
</dbReference>
<dbReference type="SMR" id="Q5YYF7"/>
<dbReference type="STRING" id="247156.NFA_19380"/>
<dbReference type="GeneID" id="61132720"/>
<dbReference type="KEGG" id="nfa:NFA_19380"/>
<dbReference type="eggNOG" id="COG0548">
    <property type="taxonomic scope" value="Bacteria"/>
</dbReference>
<dbReference type="HOGENOM" id="CLU_053680_0_1_11"/>
<dbReference type="OrthoDB" id="9803155at2"/>
<dbReference type="UniPathway" id="UPA00068">
    <property type="reaction ID" value="UER00107"/>
</dbReference>
<dbReference type="Proteomes" id="UP000006820">
    <property type="component" value="Chromosome"/>
</dbReference>
<dbReference type="GO" id="GO:0005737">
    <property type="term" value="C:cytoplasm"/>
    <property type="evidence" value="ECO:0007669"/>
    <property type="project" value="UniProtKB-SubCell"/>
</dbReference>
<dbReference type="GO" id="GO:0003991">
    <property type="term" value="F:acetylglutamate kinase activity"/>
    <property type="evidence" value="ECO:0007669"/>
    <property type="project" value="UniProtKB-UniRule"/>
</dbReference>
<dbReference type="GO" id="GO:0005524">
    <property type="term" value="F:ATP binding"/>
    <property type="evidence" value="ECO:0007669"/>
    <property type="project" value="UniProtKB-UniRule"/>
</dbReference>
<dbReference type="GO" id="GO:0042450">
    <property type="term" value="P:arginine biosynthetic process via ornithine"/>
    <property type="evidence" value="ECO:0007669"/>
    <property type="project" value="UniProtKB-UniRule"/>
</dbReference>
<dbReference type="GO" id="GO:0006526">
    <property type="term" value="P:L-arginine biosynthetic process"/>
    <property type="evidence" value="ECO:0007669"/>
    <property type="project" value="UniProtKB-UniPathway"/>
</dbReference>
<dbReference type="CDD" id="cd04250">
    <property type="entry name" value="AAK_NAGK-C"/>
    <property type="match status" value="1"/>
</dbReference>
<dbReference type="FunFam" id="3.40.1160.10:FF:000004">
    <property type="entry name" value="Acetylglutamate kinase"/>
    <property type="match status" value="1"/>
</dbReference>
<dbReference type="Gene3D" id="3.40.1160.10">
    <property type="entry name" value="Acetylglutamate kinase-like"/>
    <property type="match status" value="1"/>
</dbReference>
<dbReference type="HAMAP" id="MF_00082">
    <property type="entry name" value="ArgB"/>
    <property type="match status" value="1"/>
</dbReference>
<dbReference type="InterPro" id="IPR036393">
    <property type="entry name" value="AceGlu_kinase-like_sf"/>
</dbReference>
<dbReference type="InterPro" id="IPR004662">
    <property type="entry name" value="AcgluKinase_fam"/>
</dbReference>
<dbReference type="InterPro" id="IPR037528">
    <property type="entry name" value="ArgB"/>
</dbReference>
<dbReference type="InterPro" id="IPR001048">
    <property type="entry name" value="Asp/Glu/Uridylate_kinase"/>
</dbReference>
<dbReference type="InterPro" id="IPR001057">
    <property type="entry name" value="Glu/AcGlu_kinase"/>
</dbReference>
<dbReference type="InterPro" id="IPR041727">
    <property type="entry name" value="NAGK-C"/>
</dbReference>
<dbReference type="NCBIfam" id="TIGR00761">
    <property type="entry name" value="argB"/>
    <property type="match status" value="1"/>
</dbReference>
<dbReference type="PANTHER" id="PTHR23342">
    <property type="entry name" value="N-ACETYLGLUTAMATE SYNTHASE"/>
    <property type="match status" value="1"/>
</dbReference>
<dbReference type="PANTHER" id="PTHR23342:SF0">
    <property type="entry name" value="N-ACETYLGLUTAMATE SYNTHASE, MITOCHONDRIAL"/>
    <property type="match status" value="1"/>
</dbReference>
<dbReference type="Pfam" id="PF00696">
    <property type="entry name" value="AA_kinase"/>
    <property type="match status" value="1"/>
</dbReference>
<dbReference type="PIRSF" id="PIRSF000728">
    <property type="entry name" value="NAGK"/>
    <property type="match status" value="1"/>
</dbReference>
<dbReference type="PRINTS" id="PR00474">
    <property type="entry name" value="GLU5KINASE"/>
</dbReference>
<dbReference type="SUPFAM" id="SSF53633">
    <property type="entry name" value="Carbamate kinase-like"/>
    <property type="match status" value="1"/>
</dbReference>
<keyword id="KW-0028">Amino-acid biosynthesis</keyword>
<keyword id="KW-0055">Arginine biosynthesis</keyword>
<keyword id="KW-0067">ATP-binding</keyword>
<keyword id="KW-0963">Cytoplasm</keyword>
<keyword id="KW-0418">Kinase</keyword>
<keyword id="KW-0547">Nucleotide-binding</keyword>
<keyword id="KW-1185">Reference proteome</keyword>
<keyword id="KW-0808">Transferase</keyword>
<feature type="chain" id="PRO_0000112641" description="Acetylglutamate kinase">
    <location>
        <begin position="1"/>
        <end position="303"/>
    </location>
</feature>
<feature type="binding site" evidence="1">
    <location>
        <begin position="69"/>
        <end position="70"/>
    </location>
    <ligand>
        <name>substrate</name>
    </ligand>
</feature>
<feature type="binding site" evidence="1">
    <location>
        <position position="91"/>
    </location>
    <ligand>
        <name>substrate</name>
    </ligand>
</feature>
<feature type="binding site" evidence="1">
    <location>
        <position position="190"/>
    </location>
    <ligand>
        <name>substrate</name>
    </ligand>
</feature>
<feature type="site" description="Transition state stabilizer" evidence="1">
    <location>
        <position position="34"/>
    </location>
</feature>
<feature type="site" description="Transition state stabilizer" evidence="1">
    <location>
        <position position="251"/>
    </location>
</feature>
<protein>
    <recommendedName>
        <fullName evidence="1">Acetylglutamate kinase</fullName>
        <ecNumber evidence="1">2.7.2.8</ecNumber>
    </recommendedName>
    <alternativeName>
        <fullName evidence="1">N-acetyl-L-glutamate 5-phosphotransferase</fullName>
    </alternativeName>
    <alternativeName>
        <fullName evidence="1">NAG kinase</fullName>
        <shortName evidence="1">NAGK</shortName>
    </alternativeName>
</protein>
<sequence length="303" mass="31524">MTAIHSLTALDKAHVLADALPWLQKFRDKIVVVKYGGNAMIDEELKRAFAADMAFLRTVGVHPVVVHGGGPQISAMLKKLGLHGEFRGGFRVTTPEVMDVVRMVLFGQVGRELVGLINAHGPYAVGISGEDAGLFTATRRTVVVDGEPTDIGLVGDVTEVNPDAVLDLIGAGRIPVVSTIAPDADGVVHNINADTAAAALAEGIGAEKLVVLTDVEGLYTNWPDRSSLTSSIDAGALAELLPRLDAGMVPKMEACLRAVRGGVPTAHVIDGRVPHAVLLELFTGEGIGTMVTPSAASDGVVPA</sequence>